<feature type="chain" id="PRO_0000255875" description="Pyridoxine/pyridoxamine 5'-phosphate oxidase">
    <location>
        <begin position="1"/>
        <end position="216"/>
    </location>
</feature>
<feature type="binding site" evidence="1">
    <location>
        <begin position="12"/>
        <end position="15"/>
    </location>
    <ligand>
        <name>substrate</name>
    </ligand>
</feature>
<feature type="binding site" evidence="1">
    <location>
        <begin position="65"/>
        <end position="70"/>
    </location>
    <ligand>
        <name>FMN</name>
        <dbReference type="ChEBI" id="CHEBI:58210"/>
    </ligand>
</feature>
<feature type="binding site" evidence="1">
    <location>
        <position position="70"/>
    </location>
    <ligand>
        <name>substrate</name>
    </ligand>
</feature>
<feature type="binding site" evidence="1">
    <location>
        <begin position="80"/>
        <end position="81"/>
    </location>
    <ligand>
        <name>FMN</name>
        <dbReference type="ChEBI" id="CHEBI:58210"/>
    </ligand>
</feature>
<feature type="binding site" evidence="1">
    <location>
        <position position="86"/>
    </location>
    <ligand>
        <name>FMN</name>
        <dbReference type="ChEBI" id="CHEBI:58210"/>
    </ligand>
</feature>
<feature type="binding site" evidence="1">
    <location>
        <position position="87"/>
    </location>
    <ligand>
        <name>FMN</name>
        <dbReference type="ChEBI" id="CHEBI:58210"/>
    </ligand>
</feature>
<feature type="binding site" evidence="1">
    <location>
        <position position="127"/>
    </location>
    <ligand>
        <name>substrate</name>
    </ligand>
</feature>
<feature type="binding site" evidence="1">
    <location>
        <position position="131"/>
    </location>
    <ligand>
        <name>substrate</name>
    </ligand>
</feature>
<feature type="binding site" evidence="1">
    <location>
        <position position="135"/>
    </location>
    <ligand>
        <name>substrate</name>
    </ligand>
</feature>
<feature type="binding site" evidence="1">
    <location>
        <begin position="144"/>
        <end position="145"/>
    </location>
    <ligand>
        <name>FMN</name>
        <dbReference type="ChEBI" id="CHEBI:58210"/>
    </ligand>
</feature>
<feature type="binding site" evidence="1">
    <location>
        <position position="188"/>
    </location>
    <ligand>
        <name>FMN</name>
        <dbReference type="ChEBI" id="CHEBI:58210"/>
    </ligand>
</feature>
<feature type="binding site" evidence="1">
    <location>
        <begin position="194"/>
        <end position="196"/>
    </location>
    <ligand>
        <name>substrate</name>
    </ligand>
</feature>
<feature type="binding site" evidence="1">
    <location>
        <position position="198"/>
    </location>
    <ligand>
        <name>FMN</name>
        <dbReference type="ChEBI" id="CHEBI:58210"/>
    </ligand>
</feature>
<accession>Q126S5</accession>
<name>PDXH_POLSJ</name>
<reference key="1">
    <citation type="journal article" date="2008" name="Appl. Environ. Microbiol.">
        <title>The genome of Polaromonas sp. strain JS666: insights into the evolution of a hydrocarbon- and xenobiotic-degrading bacterium, and features of relevance to biotechnology.</title>
        <authorList>
            <person name="Mattes T.E."/>
            <person name="Alexander A.K."/>
            <person name="Richardson P.M."/>
            <person name="Munk A.C."/>
            <person name="Han C.S."/>
            <person name="Stothard P."/>
            <person name="Coleman N.V."/>
        </authorList>
    </citation>
    <scope>NUCLEOTIDE SEQUENCE [LARGE SCALE GENOMIC DNA]</scope>
    <source>
        <strain>JS666 / ATCC BAA-500</strain>
    </source>
</reference>
<gene>
    <name evidence="1" type="primary">pdxH</name>
    <name type="ordered locus">Bpro_3559</name>
</gene>
<keyword id="KW-0285">Flavoprotein</keyword>
<keyword id="KW-0288">FMN</keyword>
<keyword id="KW-0560">Oxidoreductase</keyword>
<keyword id="KW-0664">Pyridoxine biosynthesis</keyword>
<keyword id="KW-1185">Reference proteome</keyword>
<evidence type="ECO:0000255" key="1">
    <source>
        <dbReference type="HAMAP-Rule" id="MF_01629"/>
    </source>
</evidence>
<evidence type="ECO:0000305" key="2"/>
<protein>
    <recommendedName>
        <fullName evidence="1">Pyridoxine/pyridoxamine 5'-phosphate oxidase</fullName>
        <ecNumber evidence="1">1.4.3.5</ecNumber>
    </recommendedName>
    <alternativeName>
        <fullName evidence="1">PNP/PMP oxidase</fullName>
        <shortName evidence="1">PNPOx</shortName>
    </alternativeName>
    <alternativeName>
        <fullName evidence="1">Pyridoxal 5'-phosphate synthase</fullName>
    </alternativeName>
</protein>
<dbReference type="EC" id="1.4.3.5" evidence="1"/>
<dbReference type="EMBL" id="CP000316">
    <property type="protein sequence ID" value="ABE45467.1"/>
    <property type="status" value="ALT_INIT"/>
    <property type="molecule type" value="Genomic_DNA"/>
</dbReference>
<dbReference type="RefSeq" id="WP_041388922.1">
    <property type="nucleotide sequence ID" value="NC_007948.1"/>
</dbReference>
<dbReference type="SMR" id="Q126S5"/>
<dbReference type="STRING" id="296591.Bpro_3559"/>
<dbReference type="KEGG" id="pol:Bpro_3559"/>
<dbReference type="eggNOG" id="COG0259">
    <property type="taxonomic scope" value="Bacteria"/>
</dbReference>
<dbReference type="HOGENOM" id="CLU_032263_2_2_4"/>
<dbReference type="OrthoDB" id="9780392at2"/>
<dbReference type="UniPathway" id="UPA01068">
    <property type="reaction ID" value="UER00304"/>
</dbReference>
<dbReference type="UniPathway" id="UPA01068">
    <property type="reaction ID" value="UER00305"/>
</dbReference>
<dbReference type="Proteomes" id="UP000001983">
    <property type="component" value="Chromosome"/>
</dbReference>
<dbReference type="GO" id="GO:0010181">
    <property type="term" value="F:FMN binding"/>
    <property type="evidence" value="ECO:0007669"/>
    <property type="project" value="UniProtKB-UniRule"/>
</dbReference>
<dbReference type="GO" id="GO:0004733">
    <property type="term" value="F:pyridoxamine phosphate oxidase activity"/>
    <property type="evidence" value="ECO:0007669"/>
    <property type="project" value="UniProtKB-UniRule"/>
</dbReference>
<dbReference type="GO" id="GO:0008615">
    <property type="term" value="P:pyridoxine biosynthetic process"/>
    <property type="evidence" value="ECO:0007669"/>
    <property type="project" value="UniProtKB-KW"/>
</dbReference>
<dbReference type="Gene3D" id="2.30.110.10">
    <property type="entry name" value="Electron Transport, Fmn-binding Protein, Chain A"/>
    <property type="match status" value="1"/>
</dbReference>
<dbReference type="HAMAP" id="MF_01629">
    <property type="entry name" value="PdxH"/>
    <property type="match status" value="1"/>
</dbReference>
<dbReference type="InterPro" id="IPR000659">
    <property type="entry name" value="Pyridox_Oxase"/>
</dbReference>
<dbReference type="InterPro" id="IPR011576">
    <property type="entry name" value="Pyridox_Oxase_N"/>
</dbReference>
<dbReference type="InterPro" id="IPR019576">
    <property type="entry name" value="Pyridoxamine_oxidase_dimer_C"/>
</dbReference>
<dbReference type="InterPro" id="IPR012349">
    <property type="entry name" value="Split_barrel_FMN-bd"/>
</dbReference>
<dbReference type="NCBIfam" id="TIGR00558">
    <property type="entry name" value="pdxH"/>
    <property type="match status" value="1"/>
</dbReference>
<dbReference type="NCBIfam" id="NF004231">
    <property type="entry name" value="PRK05679.1"/>
    <property type="match status" value="1"/>
</dbReference>
<dbReference type="PANTHER" id="PTHR10851:SF0">
    <property type="entry name" value="PYRIDOXINE-5'-PHOSPHATE OXIDASE"/>
    <property type="match status" value="1"/>
</dbReference>
<dbReference type="PANTHER" id="PTHR10851">
    <property type="entry name" value="PYRIDOXINE-5-PHOSPHATE OXIDASE"/>
    <property type="match status" value="1"/>
</dbReference>
<dbReference type="Pfam" id="PF10590">
    <property type="entry name" value="PNP_phzG_C"/>
    <property type="match status" value="1"/>
</dbReference>
<dbReference type="Pfam" id="PF01243">
    <property type="entry name" value="PNPOx_N"/>
    <property type="match status" value="1"/>
</dbReference>
<dbReference type="PIRSF" id="PIRSF000190">
    <property type="entry name" value="Pyd_amn-ph_oxd"/>
    <property type="match status" value="1"/>
</dbReference>
<dbReference type="SUPFAM" id="SSF50475">
    <property type="entry name" value="FMN-binding split barrel"/>
    <property type="match status" value="1"/>
</dbReference>
<sequence>MSNPIIDIAALRKSYERAELNEDASHADPLKQFDQWLNEAIAAQVPEPNAMTLATVDSKLRPSTRVVLVKGYDARGIVWFTNYNSRKGLELAGNPYAALQFHWVELERVVRIEGVVEKVSAEESDAYFNSRPLDSRIGAWASPQSEVIASRSVLVTNAAKYGAKFLLQPPRPPHWGGYRLQPDNWQFWQGRKSRLHDRLRYTLQADSSWLRERLAP</sequence>
<proteinExistence type="inferred from homology"/>
<comment type="function">
    <text evidence="1">Catalyzes the oxidation of either pyridoxine 5'-phosphate (PNP) or pyridoxamine 5'-phosphate (PMP) into pyridoxal 5'-phosphate (PLP).</text>
</comment>
<comment type="catalytic activity">
    <reaction evidence="1">
        <text>pyridoxamine 5'-phosphate + O2 + H2O = pyridoxal 5'-phosphate + H2O2 + NH4(+)</text>
        <dbReference type="Rhea" id="RHEA:15817"/>
        <dbReference type="ChEBI" id="CHEBI:15377"/>
        <dbReference type="ChEBI" id="CHEBI:15379"/>
        <dbReference type="ChEBI" id="CHEBI:16240"/>
        <dbReference type="ChEBI" id="CHEBI:28938"/>
        <dbReference type="ChEBI" id="CHEBI:58451"/>
        <dbReference type="ChEBI" id="CHEBI:597326"/>
        <dbReference type="EC" id="1.4.3.5"/>
    </reaction>
</comment>
<comment type="catalytic activity">
    <reaction evidence="1">
        <text>pyridoxine 5'-phosphate + O2 = pyridoxal 5'-phosphate + H2O2</text>
        <dbReference type="Rhea" id="RHEA:15149"/>
        <dbReference type="ChEBI" id="CHEBI:15379"/>
        <dbReference type="ChEBI" id="CHEBI:16240"/>
        <dbReference type="ChEBI" id="CHEBI:58589"/>
        <dbReference type="ChEBI" id="CHEBI:597326"/>
        <dbReference type="EC" id="1.4.3.5"/>
    </reaction>
</comment>
<comment type="cofactor">
    <cofactor evidence="1">
        <name>FMN</name>
        <dbReference type="ChEBI" id="CHEBI:58210"/>
    </cofactor>
    <text evidence="1">Binds 1 FMN per subunit.</text>
</comment>
<comment type="pathway">
    <text evidence="1">Cofactor metabolism; pyridoxal 5'-phosphate salvage; pyridoxal 5'-phosphate from pyridoxamine 5'-phosphate: step 1/1.</text>
</comment>
<comment type="pathway">
    <text evidence="1">Cofactor metabolism; pyridoxal 5'-phosphate salvage; pyridoxal 5'-phosphate from pyridoxine 5'-phosphate: step 1/1.</text>
</comment>
<comment type="subunit">
    <text evidence="1">Homodimer.</text>
</comment>
<comment type="similarity">
    <text evidence="1">Belongs to the pyridoxamine 5'-phosphate oxidase family.</text>
</comment>
<comment type="sequence caution" evidence="2">
    <conflict type="erroneous initiation">
        <sequence resource="EMBL-CDS" id="ABE45467"/>
    </conflict>
</comment>
<organism>
    <name type="scientific">Polaromonas sp. (strain JS666 / ATCC BAA-500)</name>
    <dbReference type="NCBI Taxonomy" id="296591"/>
    <lineage>
        <taxon>Bacteria</taxon>
        <taxon>Pseudomonadati</taxon>
        <taxon>Pseudomonadota</taxon>
        <taxon>Betaproteobacteria</taxon>
        <taxon>Burkholderiales</taxon>
        <taxon>Comamonadaceae</taxon>
        <taxon>Polaromonas</taxon>
    </lineage>
</organism>